<organism>
    <name type="scientific">Rattus norvegicus</name>
    <name type="common">Rat</name>
    <dbReference type="NCBI Taxonomy" id="10116"/>
    <lineage>
        <taxon>Eukaryota</taxon>
        <taxon>Metazoa</taxon>
        <taxon>Chordata</taxon>
        <taxon>Craniata</taxon>
        <taxon>Vertebrata</taxon>
        <taxon>Euteleostomi</taxon>
        <taxon>Mammalia</taxon>
        <taxon>Eutheria</taxon>
        <taxon>Euarchontoglires</taxon>
        <taxon>Glires</taxon>
        <taxon>Rodentia</taxon>
        <taxon>Myomorpha</taxon>
        <taxon>Muroidea</taxon>
        <taxon>Muridae</taxon>
        <taxon>Murinae</taxon>
        <taxon>Rattus</taxon>
    </lineage>
</organism>
<protein>
    <recommendedName>
        <fullName evidence="1">40S small subunit processome assembly factor 1</fullName>
    </recommendedName>
</protein>
<reference key="1">
    <citation type="journal article" date="2004" name="Genome Res.">
        <title>The status, quality, and expansion of the NIH full-length cDNA project: the Mammalian Gene Collection (MGC).</title>
        <authorList>
            <consortium name="The MGC Project Team"/>
        </authorList>
    </citation>
    <scope>NUCLEOTIDE SEQUENCE [LARGE SCALE MRNA]</scope>
    <source>
        <tissue>Prostate</tissue>
    </source>
</reference>
<reference key="2">
    <citation type="journal article" date="2012" name="Nat. Commun.">
        <title>Quantitative maps of protein phosphorylation sites across 14 different rat organs and tissues.</title>
        <authorList>
            <person name="Lundby A."/>
            <person name="Secher A."/>
            <person name="Lage K."/>
            <person name="Nordsborg N.B."/>
            <person name="Dmytriyev A."/>
            <person name="Lundby C."/>
            <person name="Olsen J.V."/>
        </authorList>
    </citation>
    <scope>PHOSPHORYLATION [LARGE SCALE ANALYSIS] AT SER-67</scope>
    <scope>IDENTIFICATION BY MASS SPECTROMETRY [LARGE SCALE ANALYSIS]</scope>
</reference>
<proteinExistence type="evidence at protein level"/>
<dbReference type="EMBL" id="BC105747">
    <property type="protein sequence ID" value="AAI05748.1"/>
    <property type="molecule type" value="mRNA"/>
</dbReference>
<dbReference type="RefSeq" id="NP_001030091.1">
    <property type="nucleotide sequence ID" value="NM_001034919.2"/>
</dbReference>
<dbReference type="SMR" id="Q3KRF3"/>
<dbReference type="FunCoup" id="Q3KRF3">
    <property type="interactions" value="2171"/>
</dbReference>
<dbReference type="STRING" id="10116.ENSRNOP00000025948"/>
<dbReference type="iPTMnet" id="Q3KRF3"/>
<dbReference type="PhosphoSitePlus" id="Q3KRF3"/>
<dbReference type="PaxDb" id="10116-ENSRNOP00000025948"/>
<dbReference type="Ensembl" id="ENSRNOT00000025948.6">
    <property type="protein sequence ID" value="ENSRNOP00000025948.5"/>
    <property type="gene ID" value="ENSRNOG00000019169.6"/>
</dbReference>
<dbReference type="GeneID" id="292100"/>
<dbReference type="KEGG" id="rno:292100"/>
<dbReference type="UCSC" id="RGD:1562218">
    <property type="organism name" value="rat"/>
</dbReference>
<dbReference type="AGR" id="RGD:1562218"/>
<dbReference type="CTD" id="128061"/>
<dbReference type="RGD" id="1562218">
    <property type="gene designation" value="C19h1orf131"/>
</dbReference>
<dbReference type="eggNOG" id="ENOG502S2E3">
    <property type="taxonomic scope" value="Eukaryota"/>
</dbReference>
<dbReference type="GeneTree" id="ENSGT00390000017022"/>
<dbReference type="HOGENOM" id="CLU_081604_0_0_1"/>
<dbReference type="InParanoid" id="Q3KRF3"/>
<dbReference type="OMA" id="EVVQFHS"/>
<dbReference type="OrthoDB" id="10067479at2759"/>
<dbReference type="PhylomeDB" id="Q3KRF3"/>
<dbReference type="TreeFam" id="TF328381"/>
<dbReference type="PRO" id="PR:Q3KRF3"/>
<dbReference type="Proteomes" id="UP000002494">
    <property type="component" value="Chromosome 19"/>
</dbReference>
<dbReference type="Bgee" id="ENSRNOG00000019169">
    <property type="expression patterns" value="Expressed in quadriceps femoris and 19 other cell types or tissues"/>
</dbReference>
<dbReference type="GO" id="GO:0005694">
    <property type="term" value="C:chromosome"/>
    <property type="evidence" value="ECO:0000250"/>
    <property type="project" value="UniProtKB"/>
</dbReference>
<dbReference type="GO" id="GO:0005730">
    <property type="term" value="C:nucleolus"/>
    <property type="evidence" value="ECO:0007669"/>
    <property type="project" value="UniProtKB-SubCell"/>
</dbReference>
<dbReference type="GO" id="GO:0032040">
    <property type="term" value="C:small-subunit processome"/>
    <property type="evidence" value="ECO:0000250"/>
    <property type="project" value="UniProtKB"/>
</dbReference>
<dbReference type="GO" id="GO:0042274">
    <property type="term" value="P:ribosomal small subunit biogenesis"/>
    <property type="evidence" value="ECO:0000250"/>
    <property type="project" value="UniProtKB"/>
</dbReference>
<dbReference type="InterPro" id="IPR027973">
    <property type="entry name" value="FSAF1-like"/>
</dbReference>
<dbReference type="InterPro" id="IPR052852">
    <property type="entry name" value="SSU_Processome_Comp"/>
</dbReference>
<dbReference type="PANTHER" id="PTHR28366">
    <property type="entry name" value="CHROMOSOME 1 OPEN READING FRAME 131"/>
    <property type="match status" value="1"/>
</dbReference>
<dbReference type="PANTHER" id="PTHR28366:SF1">
    <property type="entry name" value="CHROMOSOME 1 OPEN READING FRAME 131"/>
    <property type="match status" value="1"/>
</dbReference>
<dbReference type="Pfam" id="PF15375">
    <property type="entry name" value="FSAF1"/>
    <property type="match status" value="1"/>
</dbReference>
<sequence>MAAERELDSSELPGSEALLDAVLRTLYDLGETEGETEQKRTRKKKEKKRDSETVADRAAEPLPLPASPGRDQRKSASSFFKKLREELQSAPAAPSEVPAATTAVSLFPLENDSKLVEVVEFHSRSEKRKPKSEEDKPAKNKTKVLEKDVVIQEFNLEKARLEVHRFGITGYGKGKERVLERERAIMLGAKPPKNTYVNYKVLQEQIKEKRTSMEEEKRAAQETDIFKRKKRKGRSQEDRRSKKLAPSILSSGRAAQVGKFRNGTLILSPADIKKINSSRVSK</sequence>
<accession>Q3KRF3</accession>
<feature type="chain" id="PRO_0000285031" description="40S small subunit processome assembly factor 1">
    <location>
        <begin position="1"/>
        <end position="282"/>
    </location>
</feature>
<feature type="region of interest" description="Disordered" evidence="2">
    <location>
        <begin position="27"/>
        <end position="98"/>
    </location>
</feature>
<feature type="region of interest" description="Disordered" evidence="2">
    <location>
        <begin position="121"/>
        <end position="143"/>
    </location>
</feature>
<feature type="region of interest" description="Disordered" evidence="2">
    <location>
        <begin position="208"/>
        <end position="254"/>
    </location>
</feature>
<feature type="compositionally biased region" description="Basic and acidic residues" evidence="2">
    <location>
        <begin position="48"/>
        <end position="59"/>
    </location>
</feature>
<feature type="compositionally biased region" description="Low complexity" evidence="2">
    <location>
        <begin position="89"/>
        <end position="98"/>
    </location>
</feature>
<feature type="compositionally biased region" description="Basic and acidic residues" evidence="2">
    <location>
        <begin position="131"/>
        <end position="143"/>
    </location>
</feature>
<feature type="compositionally biased region" description="Basic and acidic residues" evidence="2">
    <location>
        <begin position="208"/>
        <end position="226"/>
    </location>
</feature>
<feature type="modified residue" description="Phosphoserine" evidence="4">
    <location>
        <position position="67"/>
    </location>
</feature>
<feature type="modified residue" description="Phosphoserine" evidence="1">
    <location>
        <position position="75"/>
    </location>
</feature>
<feature type="modified residue" description="N6-acetyllysine" evidence="1">
    <location>
        <position position="173"/>
    </location>
</feature>
<feature type="modified residue" description="Phosphoserine" evidence="1">
    <location>
        <position position="268"/>
    </location>
</feature>
<evidence type="ECO:0000250" key="1">
    <source>
        <dbReference type="UniProtKB" id="Q8NDD1"/>
    </source>
</evidence>
<evidence type="ECO:0000256" key="2">
    <source>
        <dbReference type="SAM" id="MobiDB-lite"/>
    </source>
</evidence>
<evidence type="ECO:0000312" key="3">
    <source>
        <dbReference type="RGD" id="1562218"/>
    </source>
</evidence>
<evidence type="ECO:0007744" key="4">
    <source>
    </source>
</evidence>
<comment type="function">
    <text evidence="1">Part of the small subunit (SSU) processome, first precursor of the small eukaryotic ribosomal subunit. During the assembly of the SSU processome in the nucleolus, many ribosome biogenesis factors, an RNA chaperone and ribosomal proteins associate with the nascent pre-rRNA and work in concert to generate RNA folding, modifications, rearrangements and cleavage as well as targeted degradation of pre-ribosomal RNA by the RNA exosome. Prevents helicase DHX37 to be recruited before post-A1 state.</text>
</comment>
<comment type="subunit">
    <text evidence="1">Part of the small subunit (SSU) processome, composed of more than 70 proteins and the RNA chaperone small nucleolar RNA (snoRNA) U3.</text>
</comment>
<comment type="subcellular location">
    <subcellularLocation>
        <location evidence="1">Chromosome</location>
    </subcellularLocation>
    <subcellularLocation>
        <location evidence="1">Nucleus</location>
        <location evidence="1">Nucleolus</location>
    </subcellularLocation>
</comment>
<gene>
    <name evidence="1" type="primary">Fsaf1</name>
    <name evidence="3" type="synonym">C19h1orf131</name>
</gene>
<keyword id="KW-0007">Acetylation</keyword>
<keyword id="KW-0158">Chromosome</keyword>
<keyword id="KW-0539">Nucleus</keyword>
<keyword id="KW-0597">Phosphoprotein</keyword>
<keyword id="KW-1185">Reference proteome</keyword>
<name>FSAF1_RAT</name>